<proteinExistence type="inferred from homology"/>
<keyword id="KW-0963">Cytoplasm</keyword>
<keyword id="KW-0520">NAD</keyword>
<keyword id="KW-0560">Oxidoreductase</keyword>
<keyword id="KW-0664">Pyridoxine biosynthesis</keyword>
<keyword id="KW-1185">Reference proteome</keyword>
<gene>
    <name evidence="1" type="primary">epd</name>
    <name type="ordered locus">Tola_2349</name>
</gene>
<name>E4PD_TOLAT</name>
<feature type="chain" id="PRO_1000215826" description="D-erythrose-4-phosphate dehydrogenase">
    <location>
        <begin position="1"/>
        <end position="338"/>
    </location>
</feature>
<feature type="active site" description="Nucleophile" evidence="1">
    <location>
        <position position="155"/>
    </location>
</feature>
<feature type="binding site" evidence="1">
    <location>
        <begin position="12"/>
        <end position="13"/>
    </location>
    <ligand>
        <name>NAD(+)</name>
        <dbReference type="ChEBI" id="CHEBI:57540"/>
    </ligand>
</feature>
<feature type="binding site" evidence="1">
    <location>
        <begin position="154"/>
        <end position="156"/>
    </location>
    <ligand>
        <name>substrate</name>
    </ligand>
</feature>
<feature type="binding site" evidence="1">
    <location>
        <position position="200"/>
    </location>
    <ligand>
        <name>substrate</name>
    </ligand>
</feature>
<feature type="binding site" evidence="1">
    <location>
        <begin position="213"/>
        <end position="214"/>
    </location>
    <ligand>
        <name>substrate</name>
    </ligand>
</feature>
<feature type="binding site" evidence="1">
    <location>
        <position position="236"/>
    </location>
    <ligand>
        <name>substrate</name>
    </ligand>
</feature>
<feature type="binding site" evidence="1">
    <location>
        <position position="318"/>
    </location>
    <ligand>
        <name>NAD(+)</name>
        <dbReference type="ChEBI" id="CHEBI:57540"/>
    </ligand>
</feature>
<feature type="site" description="Activates thiol group during catalysis" evidence="1">
    <location>
        <position position="182"/>
    </location>
</feature>
<sequence>MTIRIAINGFGRIGRNVLRALYESGRRAEIKVVAINEPADAAGMAHLLKYDSTHGRFDWDVRQERDVLYVGDDAIRLLHQKEISQLPWGDLGVDIVLDCSGVYGKRADGEMHLASGAKKVLFSHPGSSDLDATVIYGVNHQQLQSEHRIVSSGSCTTNCIIPIIKLLDDAFSIESGTVTTIHASMNDQQVIDAYHPDLRRTRAASQSIIPVDTKLAAGITRIFPKFCDRFEAISVRVPTINVTAIDLSVTVTNAVSVLDVNTMLQRAAKGDFRSIVDYTELPLVSIDFNHDPHSAIVDGTQTRVSGKHLIKTLVWCDNEWGFANRMLDTTLMMARIGF</sequence>
<protein>
    <recommendedName>
        <fullName evidence="1">D-erythrose-4-phosphate dehydrogenase</fullName>
        <shortName evidence="1">E4PDH</shortName>
        <ecNumber evidence="1">1.2.1.72</ecNumber>
    </recommendedName>
</protein>
<comment type="function">
    <text evidence="1">Catalyzes the NAD-dependent conversion of D-erythrose 4-phosphate to 4-phosphoerythronate.</text>
</comment>
<comment type="catalytic activity">
    <reaction evidence="1">
        <text>D-erythrose 4-phosphate + NAD(+) + H2O = 4-phospho-D-erythronate + NADH + 2 H(+)</text>
        <dbReference type="Rhea" id="RHEA:12056"/>
        <dbReference type="ChEBI" id="CHEBI:15377"/>
        <dbReference type="ChEBI" id="CHEBI:15378"/>
        <dbReference type="ChEBI" id="CHEBI:16897"/>
        <dbReference type="ChEBI" id="CHEBI:57540"/>
        <dbReference type="ChEBI" id="CHEBI:57945"/>
        <dbReference type="ChEBI" id="CHEBI:58766"/>
        <dbReference type="EC" id="1.2.1.72"/>
    </reaction>
</comment>
<comment type="pathway">
    <text evidence="1">Cofactor biosynthesis; pyridoxine 5'-phosphate biosynthesis; pyridoxine 5'-phosphate from D-erythrose 4-phosphate: step 1/5.</text>
</comment>
<comment type="subunit">
    <text evidence="1">Homotetramer.</text>
</comment>
<comment type="subcellular location">
    <subcellularLocation>
        <location evidence="1">Cytoplasm</location>
    </subcellularLocation>
</comment>
<comment type="similarity">
    <text evidence="1">Belongs to the glyceraldehyde-3-phosphate dehydrogenase family. Epd subfamily.</text>
</comment>
<dbReference type="EC" id="1.2.1.72" evidence="1"/>
<dbReference type="EMBL" id="CP001616">
    <property type="protein sequence ID" value="ACQ93946.1"/>
    <property type="molecule type" value="Genomic_DNA"/>
</dbReference>
<dbReference type="RefSeq" id="WP_015879414.1">
    <property type="nucleotide sequence ID" value="NC_012691.1"/>
</dbReference>
<dbReference type="SMR" id="C4L9J3"/>
<dbReference type="STRING" id="595494.Tola_2349"/>
<dbReference type="KEGG" id="tau:Tola_2349"/>
<dbReference type="eggNOG" id="COG0057">
    <property type="taxonomic scope" value="Bacteria"/>
</dbReference>
<dbReference type="HOGENOM" id="CLU_030140_0_2_6"/>
<dbReference type="OrthoDB" id="9803304at2"/>
<dbReference type="UniPathway" id="UPA00244">
    <property type="reaction ID" value="UER00309"/>
</dbReference>
<dbReference type="Proteomes" id="UP000009073">
    <property type="component" value="Chromosome"/>
</dbReference>
<dbReference type="GO" id="GO:0005737">
    <property type="term" value="C:cytoplasm"/>
    <property type="evidence" value="ECO:0007669"/>
    <property type="project" value="UniProtKB-SubCell"/>
</dbReference>
<dbReference type="GO" id="GO:0048001">
    <property type="term" value="F:erythrose-4-phosphate dehydrogenase activity"/>
    <property type="evidence" value="ECO:0007669"/>
    <property type="project" value="UniProtKB-UniRule"/>
</dbReference>
<dbReference type="GO" id="GO:0051287">
    <property type="term" value="F:NAD binding"/>
    <property type="evidence" value="ECO:0007669"/>
    <property type="project" value="InterPro"/>
</dbReference>
<dbReference type="GO" id="GO:0042823">
    <property type="term" value="P:pyridoxal phosphate biosynthetic process"/>
    <property type="evidence" value="ECO:0007669"/>
    <property type="project" value="UniProtKB-UniRule"/>
</dbReference>
<dbReference type="GO" id="GO:0008615">
    <property type="term" value="P:pyridoxine biosynthetic process"/>
    <property type="evidence" value="ECO:0007669"/>
    <property type="project" value="UniProtKB-UniRule"/>
</dbReference>
<dbReference type="CDD" id="cd23937">
    <property type="entry name" value="GAPDH_C_E4PDH"/>
    <property type="match status" value="1"/>
</dbReference>
<dbReference type="CDD" id="cd17892">
    <property type="entry name" value="GAPDH_N_E4PDH"/>
    <property type="match status" value="1"/>
</dbReference>
<dbReference type="FunFam" id="3.30.360.10:FF:000007">
    <property type="entry name" value="D-erythrose-4-phosphate dehydrogenase"/>
    <property type="match status" value="1"/>
</dbReference>
<dbReference type="FunFam" id="3.40.50.720:FF:000001">
    <property type="entry name" value="Glyceraldehyde-3-phosphate dehydrogenase"/>
    <property type="match status" value="1"/>
</dbReference>
<dbReference type="Gene3D" id="3.30.360.10">
    <property type="entry name" value="Dihydrodipicolinate Reductase, domain 2"/>
    <property type="match status" value="1"/>
</dbReference>
<dbReference type="Gene3D" id="3.40.50.720">
    <property type="entry name" value="NAD(P)-binding Rossmann-like Domain"/>
    <property type="match status" value="1"/>
</dbReference>
<dbReference type="HAMAP" id="MF_01640">
    <property type="entry name" value="E4P_dehydrog"/>
    <property type="match status" value="1"/>
</dbReference>
<dbReference type="InterPro" id="IPR006422">
    <property type="entry name" value="E4P_DH_bac"/>
</dbReference>
<dbReference type="InterPro" id="IPR020831">
    <property type="entry name" value="GlycerAld/Erythrose_P_DH"/>
</dbReference>
<dbReference type="InterPro" id="IPR020829">
    <property type="entry name" value="GlycerAld_3-P_DH_cat"/>
</dbReference>
<dbReference type="InterPro" id="IPR020828">
    <property type="entry name" value="GlycerAld_3-P_DH_NAD(P)-bd"/>
</dbReference>
<dbReference type="InterPro" id="IPR036291">
    <property type="entry name" value="NAD(P)-bd_dom_sf"/>
</dbReference>
<dbReference type="NCBIfam" id="TIGR01532">
    <property type="entry name" value="E4PD_g-proteo"/>
    <property type="match status" value="1"/>
</dbReference>
<dbReference type="NCBIfam" id="NF010058">
    <property type="entry name" value="PRK13535.1"/>
    <property type="match status" value="1"/>
</dbReference>
<dbReference type="PANTHER" id="PTHR43148">
    <property type="entry name" value="GLYCERALDEHYDE-3-PHOSPHATE DEHYDROGENASE 2"/>
    <property type="match status" value="1"/>
</dbReference>
<dbReference type="Pfam" id="PF02800">
    <property type="entry name" value="Gp_dh_C"/>
    <property type="match status" value="1"/>
</dbReference>
<dbReference type="Pfam" id="PF00044">
    <property type="entry name" value="Gp_dh_N"/>
    <property type="match status" value="1"/>
</dbReference>
<dbReference type="PIRSF" id="PIRSF000149">
    <property type="entry name" value="GAP_DH"/>
    <property type="match status" value="1"/>
</dbReference>
<dbReference type="PRINTS" id="PR00078">
    <property type="entry name" value="G3PDHDRGNASE"/>
</dbReference>
<dbReference type="SMART" id="SM00846">
    <property type="entry name" value="Gp_dh_N"/>
    <property type="match status" value="1"/>
</dbReference>
<dbReference type="SUPFAM" id="SSF55347">
    <property type="entry name" value="Glyceraldehyde-3-phosphate dehydrogenase-like, C-terminal domain"/>
    <property type="match status" value="1"/>
</dbReference>
<dbReference type="SUPFAM" id="SSF51735">
    <property type="entry name" value="NAD(P)-binding Rossmann-fold domains"/>
    <property type="match status" value="1"/>
</dbReference>
<reference key="1">
    <citation type="submission" date="2009-05" db="EMBL/GenBank/DDBJ databases">
        <title>Complete sequence of Tolumonas auensis DSM 9187.</title>
        <authorList>
            <consortium name="US DOE Joint Genome Institute"/>
            <person name="Lucas S."/>
            <person name="Copeland A."/>
            <person name="Lapidus A."/>
            <person name="Glavina del Rio T."/>
            <person name="Tice H."/>
            <person name="Bruce D."/>
            <person name="Goodwin L."/>
            <person name="Pitluck S."/>
            <person name="Chertkov O."/>
            <person name="Brettin T."/>
            <person name="Detter J.C."/>
            <person name="Han C."/>
            <person name="Larimer F."/>
            <person name="Land M."/>
            <person name="Hauser L."/>
            <person name="Kyrpides N."/>
            <person name="Mikhailova N."/>
            <person name="Spring S."/>
            <person name="Beller H."/>
        </authorList>
    </citation>
    <scope>NUCLEOTIDE SEQUENCE [LARGE SCALE GENOMIC DNA]</scope>
    <source>
        <strain>DSM 9187 / NBRC 110442 / TA 4</strain>
    </source>
</reference>
<accession>C4L9J3</accession>
<evidence type="ECO:0000255" key="1">
    <source>
        <dbReference type="HAMAP-Rule" id="MF_01640"/>
    </source>
</evidence>
<organism>
    <name type="scientific">Tolumonas auensis (strain DSM 9187 / NBRC 110442 / TA 4)</name>
    <dbReference type="NCBI Taxonomy" id="595494"/>
    <lineage>
        <taxon>Bacteria</taxon>
        <taxon>Pseudomonadati</taxon>
        <taxon>Pseudomonadota</taxon>
        <taxon>Gammaproteobacteria</taxon>
        <taxon>Aeromonadales</taxon>
        <taxon>Aeromonadaceae</taxon>
        <taxon>Tolumonas</taxon>
    </lineage>
</organism>